<organism>
    <name type="scientific">Pyrococcus abyssi (strain GE5 / Orsay)</name>
    <dbReference type="NCBI Taxonomy" id="272844"/>
    <lineage>
        <taxon>Archaea</taxon>
        <taxon>Methanobacteriati</taxon>
        <taxon>Methanobacteriota</taxon>
        <taxon>Thermococci</taxon>
        <taxon>Thermococcales</taxon>
        <taxon>Thermococcaceae</taxon>
        <taxon>Pyrococcus</taxon>
    </lineage>
</organism>
<accession>Q9V298</accession>
<accession>G8ZG11</accession>
<comment type="catalytic activity">
    <reaction>
        <text>Endohydrolysis of (1-&gt;4)-alpha-D-glucosidic linkages in polysaccharides containing three or more (1-&gt;4)-alpha-linked D-glucose units.</text>
        <dbReference type="EC" id="3.2.1.1"/>
    </reaction>
</comment>
<comment type="similarity">
    <text evidence="2">Belongs to the glycosyl hydrolase 57 family.</text>
</comment>
<feature type="chain" id="PRO_0000184572" description="Alpha-amylase">
    <location>
        <begin position="1"/>
        <end position="655"/>
    </location>
</feature>
<feature type="active site" description="Nucleophile" evidence="1">
    <location>
        <position position="123"/>
    </location>
</feature>
<feature type="active site" description="Proton donor" evidence="1">
    <location>
        <position position="214"/>
    </location>
</feature>
<protein>
    <recommendedName>
        <fullName>Alpha-amylase</fullName>
        <ecNumber>3.2.1.1</ecNumber>
    </recommendedName>
</protein>
<sequence>MPRINFIFGIHNHQPLGNFGWVMEEAYEKAYRPFLEILEEYPNMKVAIHISGILVEWLEENKPDYIDLLKSLVRKGQVEIVVAGFYEPVLAAIPKEDRLEQIYLLKEWAKKIGYDAKGLWLTERVWQPELVKTLREAGIEYVVVDDYHFMSAGLSKDQLFWPYYTEDGGEVITVFPIDEKLRYLIPFRPVDKVISYLHSLASEDESKVAVFHDDGEKFGIWPMTYEWVYEKGWLREFFDRVSSDEAINIMLYSEYLQKFKPKGLVYLPIASYFEMSEWSLPAQQAKLFVEFVEKLKELNMFERYRVFVRGGIWKNFFYKYPEANYMHKRMLMLSRLLRDNPSARRFVLRAQCNDAYWHGVFGGIYLPHLRRAIWSNLIKAHSHLEPKNKILDVDFDGREEVFLENDNFIIVVKPHYGGSIFELSSKRRAVNYADVIARRWEHYHNLGESESDDNENQEGVSSIHEIGKRIPEDIRKELAYDRYRRGILQDHFFSANETLDRYRLAKYWELGDFIEGVYNYEVGNGLVLWRRGKVLNVTVDVKKSIEVREDGFSVRYTVLSEEDIEALFGIELNIAVHSIKESPEELIGKRIKVNDKYGVGEFEIVLNKKARIWKYPVKTLSQSEAGWDYIQQGVSYTIIYPINGRLDIELYFREL</sequence>
<proteinExistence type="inferred from homology"/>
<gene>
    <name type="primary">amyA</name>
    <name type="ordered locus">PYRAB01760</name>
    <name type="ORF">PAB0118</name>
</gene>
<name>AMYA_PYRAB</name>
<evidence type="ECO:0000250" key="1"/>
<evidence type="ECO:0000305" key="2"/>
<reference key="1">
    <citation type="journal article" date="2003" name="Mol. Microbiol.">
        <title>An integrated analysis of the genome of the hyperthermophilic archaeon Pyrococcus abyssi.</title>
        <authorList>
            <person name="Cohen G.N."/>
            <person name="Barbe V."/>
            <person name="Flament D."/>
            <person name="Galperin M."/>
            <person name="Heilig R."/>
            <person name="Lecompte O."/>
            <person name="Poch O."/>
            <person name="Prieur D."/>
            <person name="Querellou J."/>
            <person name="Ripp R."/>
            <person name="Thierry J.-C."/>
            <person name="Van der Oost J."/>
            <person name="Weissenbach J."/>
            <person name="Zivanovic Y."/>
            <person name="Forterre P."/>
        </authorList>
    </citation>
    <scope>NUCLEOTIDE SEQUENCE [LARGE SCALE GENOMIC DNA]</scope>
    <source>
        <strain>GE5 / Orsay</strain>
    </source>
</reference>
<reference key="2">
    <citation type="journal article" date="2012" name="Curr. Microbiol.">
        <title>Re-annotation of two hyperthermophilic archaea Pyrococcus abyssi GE5 and Pyrococcus furiosus DSM 3638.</title>
        <authorList>
            <person name="Gao J."/>
            <person name="Wang J."/>
        </authorList>
    </citation>
    <scope>GENOME REANNOTATION</scope>
    <source>
        <strain>GE5 / Orsay</strain>
    </source>
</reference>
<keyword id="KW-0119">Carbohydrate metabolism</keyword>
<keyword id="KW-0326">Glycosidase</keyword>
<keyword id="KW-0378">Hydrolase</keyword>
<dbReference type="EC" id="3.2.1.1"/>
<dbReference type="EMBL" id="AJ248283">
    <property type="protein sequence ID" value="CAB49100.1"/>
    <property type="molecule type" value="Genomic_DNA"/>
</dbReference>
<dbReference type="EMBL" id="HE613800">
    <property type="protein sequence ID" value="CCE69552.1"/>
    <property type="molecule type" value="Genomic_DNA"/>
</dbReference>
<dbReference type="PIR" id="E75206">
    <property type="entry name" value="E75206"/>
</dbReference>
<dbReference type="RefSeq" id="WP_010867300.1">
    <property type="nucleotide sequence ID" value="NC_000868.1"/>
</dbReference>
<dbReference type="SMR" id="Q9V298"/>
<dbReference type="STRING" id="272844.PAB0118"/>
<dbReference type="CAZy" id="GH57">
    <property type="family name" value="Glycoside Hydrolase Family 57"/>
</dbReference>
<dbReference type="KEGG" id="pab:PAB0118"/>
<dbReference type="PATRIC" id="fig|272844.11.peg.190"/>
<dbReference type="eggNOG" id="arCOG03280">
    <property type="taxonomic scope" value="Archaea"/>
</dbReference>
<dbReference type="HOGENOM" id="CLU_026700_0_0_2"/>
<dbReference type="OrthoDB" id="18576at2157"/>
<dbReference type="PhylomeDB" id="Q9V298"/>
<dbReference type="Proteomes" id="UP000000810">
    <property type="component" value="Chromosome"/>
</dbReference>
<dbReference type="Proteomes" id="UP000009139">
    <property type="component" value="Chromosome"/>
</dbReference>
<dbReference type="GO" id="GO:0004556">
    <property type="term" value="F:alpha-amylase activity"/>
    <property type="evidence" value="ECO:0007669"/>
    <property type="project" value="UniProtKB-EC"/>
</dbReference>
<dbReference type="GO" id="GO:0030246">
    <property type="term" value="F:carbohydrate binding"/>
    <property type="evidence" value="ECO:0007669"/>
    <property type="project" value="InterPro"/>
</dbReference>
<dbReference type="GO" id="GO:0005975">
    <property type="term" value="P:carbohydrate metabolic process"/>
    <property type="evidence" value="ECO:0007669"/>
    <property type="project" value="InterPro"/>
</dbReference>
<dbReference type="CDD" id="cd10793">
    <property type="entry name" value="GH57N_TLGT_like"/>
    <property type="match status" value="1"/>
</dbReference>
<dbReference type="Gene3D" id="2.70.98.10">
    <property type="match status" value="1"/>
</dbReference>
<dbReference type="Gene3D" id="3.20.110.20">
    <property type="match status" value="1"/>
</dbReference>
<dbReference type="InterPro" id="IPR015179">
    <property type="entry name" value="A-amylase/a-glucTrfase_C"/>
</dbReference>
<dbReference type="InterPro" id="IPR015178">
    <property type="entry name" value="A-amylase/a-glucTrfase_central"/>
</dbReference>
<dbReference type="InterPro" id="IPR011013">
    <property type="entry name" value="Gal_mutarotase_sf_dom"/>
</dbReference>
<dbReference type="InterPro" id="IPR014718">
    <property type="entry name" value="GH-type_carb-bd"/>
</dbReference>
<dbReference type="InterPro" id="IPR052046">
    <property type="entry name" value="GH57_Enzymes"/>
</dbReference>
<dbReference type="InterPro" id="IPR011330">
    <property type="entry name" value="Glyco_hydro/deAcase_b/a-brl"/>
</dbReference>
<dbReference type="InterPro" id="IPR028995">
    <property type="entry name" value="Glyco_hydro_57/38_cen_sf"/>
</dbReference>
<dbReference type="InterPro" id="IPR004300">
    <property type="entry name" value="Glyco_hydro_57_N"/>
</dbReference>
<dbReference type="PANTHER" id="PTHR36306:SF1">
    <property type="entry name" value="ALPHA-AMYLASE-RELATED"/>
    <property type="match status" value="1"/>
</dbReference>
<dbReference type="PANTHER" id="PTHR36306">
    <property type="entry name" value="ALPHA-AMYLASE-RELATED-RELATED"/>
    <property type="match status" value="1"/>
</dbReference>
<dbReference type="Pfam" id="PF09094">
    <property type="entry name" value="AmyA-A_glucT_m"/>
    <property type="match status" value="1"/>
</dbReference>
<dbReference type="Pfam" id="PF09095">
    <property type="entry name" value="AmyA-gluTrfs_C"/>
    <property type="match status" value="1"/>
</dbReference>
<dbReference type="Pfam" id="PF03065">
    <property type="entry name" value="Glyco_hydro_57"/>
    <property type="match status" value="1"/>
</dbReference>
<dbReference type="SUPFAM" id="SSF88688">
    <property type="entry name" value="Families 57/38 glycoside transferase middle domain"/>
    <property type="match status" value="1"/>
</dbReference>
<dbReference type="SUPFAM" id="SSF74650">
    <property type="entry name" value="Galactose mutarotase-like"/>
    <property type="match status" value="1"/>
</dbReference>
<dbReference type="SUPFAM" id="SSF88713">
    <property type="entry name" value="Glycoside hydrolase/deacetylase"/>
    <property type="match status" value="1"/>
</dbReference>